<feature type="chain" id="PRO_0000166235" description="Glycine cleavage system H protein 1">
    <location>
        <begin position="1"/>
        <end position="127"/>
    </location>
</feature>
<feature type="domain" description="Lipoyl-binding" evidence="2">
    <location>
        <begin position="20"/>
        <end position="101"/>
    </location>
</feature>
<feature type="modified residue" description="N6-lipoyllysine" evidence="1">
    <location>
        <position position="60"/>
    </location>
</feature>
<accession>Q88P64</accession>
<name>GCSH1_PSEPK</name>
<keyword id="KW-0450">Lipoyl</keyword>
<keyword id="KW-1185">Reference proteome</keyword>
<organism>
    <name type="scientific">Pseudomonas putida (strain ATCC 47054 / DSM 6125 / CFBP 8728 / NCIMB 11950 / KT2440)</name>
    <dbReference type="NCBI Taxonomy" id="160488"/>
    <lineage>
        <taxon>Bacteria</taxon>
        <taxon>Pseudomonadati</taxon>
        <taxon>Pseudomonadota</taxon>
        <taxon>Gammaproteobacteria</taxon>
        <taxon>Pseudomonadales</taxon>
        <taxon>Pseudomonadaceae</taxon>
        <taxon>Pseudomonas</taxon>
    </lineage>
</organism>
<evidence type="ECO:0000255" key="1">
    <source>
        <dbReference type="HAMAP-Rule" id="MF_00272"/>
    </source>
</evidence>
<evidence type="ECO:0000255" key="2">
    <source>
        <dbReference type="PROSITE-ProRule" id="PRU01066"/>
    </source>
</evidence>
<dbReference type="EMBL" id="AE015451">
    <property type="protein sequence ID" value="AAN66614.1"/>
    <property type="molecule type" value="Genomic_DNA"/>
</dbReference>
<dbReference type="RefSeq" id="NP_743150.1">
    <property type="nucleotide sequence ID" value="NC_002947.4"/>
</dbReference>
<dbReference type="SMR" id="Q88P64"/>
<dbReference type="STRING" id="160488.PP_0989"/>
<dbReference type="PaxDb" id="160488-PP_0989"/>
<dbReference type="KEGG" id="ppu:PP_0989"/>
<dbReference type="PATRIC" id="fig|160488.4.peg.1049"/>
<dbReference type="eggNOG" id="COG0509">
    <property type="taxonomic scope" value="Bacteria"/>
</dbReference>
<dbReference type="HOGENOM" id="CLU_097408_2_0_6"/>
<dbReference type="OrthoDB" id="9796712at2"/>
<dbReference type="PhylomeDB" id="Q88P64"/>
<dbReference type="BioCyc" id="PPUT160488:G1G01-1062-MONOMER"/>
<dbReference type="Proteomes" id="UP000000556">
    <property type="component" value="Chromosome"/>
</dbReference>
<dbReference type="GO" id="GO:0005829">
    <property type="term" value="C:cytosol"/>
    <property type="evidence" value="ECO:0007669"/>
    <property type="project" value="TreeGrafter"/>
</dbReference>
<dbReference type="GO" id="GO:0005960">
    <property type="term" value="C:glycine cleavage complex"/>
    <property type="evidence" value="ECO:0007669"/>
    <property type="project" value="InterPro"/>
</dbReference>
<dbReference type="GO" id="GO:0019464">
    <property type="term" value="P:glycine decarboxylation via glycine cleavage system"/>
    <property type="evidence" value="ECO:0007669"/>
    <property type="project" value="UniProtKB-UniRule"/>
</dbReference>
<dbReference type="CDD" id="cd06848">
    <property type="entry name" value="GCS_H"/>
    <property type="match status" value="1"/>
</dbReference>
<dbReference type="Gene3D" id="2.40.50.100">
    <property type="match status" value="1"/>
</dbReference>
<dbReference type="HAMAP" id="MF_00272">
    <property type="entry name" value="GcvH"/>
    <property type="match status" value="1"/>
</dbReference>
<dbReference type="InterPro" id="IPR000089">
    <property type="entry name" value="Biotin_lipoyl"/>
</dbReference>
<dbReference type="InterPro" id="IPR002930">
    <property type="entry name" value="GCV_H"/>
</dbReference>
<dbReference type="InterPro" id="IPR033753">
    <property type="entry name" value="GCV_H/Fam206"/>
</dbReference>
<dbReference type="InterPro" id="IPR017453">
    <property type="entry name" value="GCV_H_sub"/>
</dbReference>
<dbReference type="InterPro" id="IPR011053">
    <property type="entry name" value="Single_hybrid_motif"/>
</dbReference>
<dbReference type="NCBIfam" id="TIGR00527">
    <property type="entry name" value="gcvH"/>
    <property type="match status" value="1"/>
</dbReference>
<dbReference type="NCBIfam" id="NF002270">
    <property type="entry name" value="PRK01202.1"/>
    <property type="match status" value="1"/>
</dbReference>
<dbReference type="PANTHER" id="PTHR11715">
    <property type="entry name" value="GLYCINE CLEAVAGE SYSTEM H PROTEIN"/>
    <property type="match status" value="1"/>
</dbReference>
<dbReference type="PANTHER" id="PTHR11715:SF3">
    <property type="entry name" value="GLYCINE CLEAVAGE SYSTEM H PROTEIN-RELATED"/>
    <property type="match status" value="1"/>
</dbReference>
<dbReference type="Pfam" id="PF01597">
    <property type="entry name" value="GCV_H"/>
    <property type="match status" value="1"/>
</dbReference>
<dbReference type="SUPFAM" id="SSF51230">
    <property type="entry name" value="Single hybrid motif"/>
    <property type="match status" value="1"/>
</dbReference>
<dbReference type="PROSITE" id="PS50968">
    <property type="entry name" value="BIOTINYL_LIPOYL"/>
    <property type="match status" value="1"/>
</dbReference>
<sequence length="127" mass="13956">MSELRFTEDHEWLRVEADGSVTVGITAYAQNALGDVVFVQLPELQQYEKGNEASTVESVKAASGVYMPLTGEVVEVNGQLEDSPELVNEDPMGEGWFFRFIPADAEAVTALLDQDAYDRLLKANDDA</sequence>
<protein>
    <recommendedName>
        <fullName evidence="1">Glycine cleavage system H protein 1</fullName>
    </recommendedName>
</protein>
<proteinExistence type="inferred from homology"/>
<comment type="function">
    <text evidence="1">The glycine cleavage system catalyzes the degradation of glycine. The H protein shuttles the methylamine group of glycine from the P protein to the T protein.</text>
</comment>
<comment type="cofactor">
    <cofactor evidence="1">
        <name>(R)-lipoate</name>
        <dbReference type="ChEBI" id="CHEBI:83088"/>
    </cofactor>
    <text evidence="1">Binds 1 lipoyl cofactor covalently.</text>
</comment>
<comment type="subunit">
    <text evidence="1">The glycine cleavage system is composed of four proteins: P, T, L and H.</text>
</comment>
<comment type="similarity">
    <text evidence="1">Belongs to the GcvH family.</text>
</comment>
<gene>
    <name evidence="1" type="primary">gcvH1</name>
    <name type="synonym">gcvH-1</name>
    <name type="ordered locus">PP_0989</name>
</gene>
<reference key="1">
    <citation type="journal article" date="2002" name="Environ. Microbiol.">
        <title>Complete genome sequence and comparative analysis of the metabolically versatile Pseudomonas putida KT2440.</title>
        <authorList>
            <person name="Nelson K.E."/>
            <person name="Weinel C."/>
            <person name="Paulsen I.T."/>
            <person name="Dodson R.J."/>
            <person name="Hilbert H."/>
            <person name="Martins dos Santos V.A.P."/>
            <person name="Fouts D.E."/>
            <person name="Gill S.R."/>
            <person name="Pop M."/>
            <person name="Holmes M."/>
            <person name="Brinkac L.M."/>
            <person name="Beanan M.J."/>
            <person name="DeBoy R.T."/>
            <person name="Daugherty S.C."/>
            <person name="Kolonay J.F."/>
            <person name="Madupu R."/>
            <person name="Nelson W.C."/>
            <person name="White O."/>
            <person name="Peterson J.D."/>
            <person name="Khouri H.M."/>
            <person name="Hance I."/>
            <person name="Chris Lee P."/>
            <person name="Holtzapple E.K."/>
            <person name="Scanlan D."/>
            <person name="Tran K."/>
            <person name="Moazzez A."/>
            <person name="Utterback T.R."/>
            <person name="Rizzo M."/>
            <person name="Lee K."/>
            <person name="Kosack D."/>
            <person name="Moestl D."/>
            <person name="Wedler H."/>
            <person name="Lauber J."/>
            <person name="Stjepandic D."/>
            <person name="Hoheisel J."/>
            <person name="Straetz M."/>
            <person name="Heim S."/>
            <person name="Kiewitz C."/>
            <person name="Eisen J.A."/>
            <person name="Timmis K.N."/>
            <person name="Duesterhoeft A."/>
            <person name="Tuemmler B."/>
            <person name="Fraser C.M."/>
        </authorList>
    </citation>
    <scope>NUCLEOTIDE SEQUENCE [LARGE SCALE GENOMIC DNA]</scope>
    <source>
        <strain>ATCC 47054 / DSM 6125 / CFBP 8728 / NCIMB 11950 / KT2440</strain>
    </source>
</reference>